<reference evidence="5" key="1">
    <citation type="journal article" date="2020" name="J. Biol. Chem.">
        <title>Discovery and mechanistic studies of cytotoxic cyclotides from the medicinal herb Hybanthus enneaspermus.</title>
        <authorList>
            <person name="Du Q."/>
            <person name="Chan L.Y."/>
            <person name="Gilding E.K."/>
            <person name="Henriques S.T."/>
            <person name="Condon N.D."/>
            <person name="Ravipati A.S."/>
            <person name="Kaas Q."/>
            <person name="Huang Y.H."/>
            <person name="Craik D.J."/>
        </authorList>
    </citation>
    <scope>PROTEIN SEQUENCE</scope>
    <scope>MASS SPECTROMETRY</scope>
    <scope>TISSUE SPECIFICITY</scope>
    <scope>DISULFIDE BONDS</scope>
</reference>
<protein>
    <recommendedName>
        <fullName evidence="4">Cyclotide hyen-F</fullName>
    </recommendedName>
</protein>
<accession>C0HLP0</accession>
<keyword id="KW-0903">Direct protein sequencing</keyword>
<keyword id="KW-1015">Disulfide bond</keyword>
<keyword id="KW-0960">Knottin</keyword>
<keyword id="KW-0611">Plant defense</keyword>
<organism evidence="4">
    <name type="scientific">Pigea enneasperma</name>
    <name type="common">Spade flower</name>
    <name type="synonym">Afrohybanthus enneaspermus</name>
    <dbReference type="NCBI Taxonomy" id="212266"/>
    <lineage>
        <taxon>Eukaryota</taxon>
        <taxon>Viridiplantae</taxon>
        <taxon>Streptophyta</taxon>
        <taxon>Embryophyta</taxon>
        <taxon>Tracheophyta</taxon>
        <taxon>Spermatophyta</taxon>
        <taxon>Magnoliopsida</taxon>
        <taxon>eudicotyledons</taxon>
        <taxon>Gunneridae</taxon>
        <taxon>Pentapetalae</taxon>
        <taxon>rosids</taxon>
        <taxon>fabids</taxon>
        <taxon>Malpighiales</taxon>
        <taxon>Violaceae</taxon>
        <taxon>Pigea</taxon>
    </lineage>
</organism>
<name>CYHEF_PIGEN</name>
<proteinExistence type="evidence at protein level"/>
<dbReference type="SMR" id="C0HLP0"/>
<dbReference type="GO" id="GO:0051715">
    <property type="term" value="P:cytolysis in another organism"/>
    <property type="evidence" value="ECO:0000314"/>
    <property type="project" value="UniProtKB"/>
</dbReference>
<dbReference type="GO" id="GO:0006952">
    <property type="term" value="P:defense response"/>
    <property type="evidence" value="ECO:0000314"/>
    <property type="project" value="UniProtKB"/>
</dbReference>
<dbReference type="InterPro" id="IPR005535">
    <property type="entry name" value="Cyclotide"/>
</dbReference>
<dbReference type="InterPro" id="IPR012323">
    <property type="entry name" value="Cyclotide_bracelet_CS"/>
</dbReference>
<dbReference type="InterPro" id="IPR036146">
    <property type="entry name" value="Cyclotide_sf"/>
</dbReference>
<dbReference type="Pfam" id="PF03784">
    <property type="entry name" value="Cyclotide"/>
    <property type="match status" value="1"/>
</dbReference>
<dbReference type="PIRSF" id="PIRSF037891">
    <property type="entry name" value="Cycloviolacin"/>
    <property type="match status" value="1"/>
</dbReference>
<dbReference type="SUPFAM" id="SSF57038">
    <property type="entry name" value="Cyclotides"/>
    <property type="match status" value="1"/>
</dbReference>
<dbReference type="PROSITE" id="PS51052">
    <property type="entry name" value="CYCLOTIDE"/>
    <property type="match status" value="1"/>
</dbReference>
<dbReference type="PROSITE" id="PS60008">
    <property type="entry name" value="CYCLOTIDE_BRACELET"/>
    <property type="match status" value="1"/>
</dbReference>
<comment type="function">
    <text evidence="2">Probably participates in a plant defense mechanism.</text>
</comment>
<comment type="tissue specificity">
    <text evidence="3">Detected in seeds (at protein level).</text>
</comment>
<comment type="domain">
    <text evidence="5">The presence of a 'disulfide through disulfide knot' structurally defines this protein as a knottin.</text>
</comment>
<comment type="PTM">
    <text evidence="2">This is a cyclic peptide.</text>
</comment>
<comment type="mass spectrometry"/>
<comment type="similarity">
    <text evidence="2">Belongs to the cyclotide family. Bracelet subfamily.</text>
</comment>
<comment type="caution">
    <text evidence="2">This peptide is cyclic. The start position was chosen by similarity to Oak1 (kalata B1) for which the DNA sequence is known.</text>
</comment>
<feature type="peptide" id="PRO_0000450762" description="Cyclotide hyen-F" evidence="2">
    <location>
        <begin position="1"/>
        <end position="30"/>
    </location>
</feature>
<feature type="disulfide bond" evidence="2 3">
    <location>
        <begin position="4"/>
        <end position="20"/>
    </location>
</feature>
<feature type="disulfide bond" evidence="2 3">
    <location>
        <begin position="8"/>
        <end position="22"/>
    </location>
</feature>
<feature type="disulfide bond" evidence="2 3">
    <location>
        <begin position="13"/>
        <end position="27"/>
    </location>
</feature>
<feature type="cross-link" description="Cyclopeptide (Gly-Asn)" evidence="1">
    <location>
        <begin position="1"/>
        <end position="30"/>
    </location>
</feature>
<sequence>GLPCGESCVYIPCISTVLGCSCSNKVCYRN</sequence>
<evidence type="ECO:0000250" key="1">
    <source>
        <dbReference type="UniProtKB" id="C0HKI7"/>
    </source>
</evidence>
<evidence type="ECO:0000255" key="2">
    <source>
        <dbReference type="PROSITE-ProRule" id="PRU00395"/>
    </source>
</evidence>
<evidence type="ECO:0000269" key="3">
    <source>
    </source>
</evidence>
<evidence type="ECO:0000303" key="4">
    <source>
    </source>
</evidence>
<evidence type="ECO:0000305" key="5"/>